<proteinExistence type="evidence at protein level"/>
<keyword id="KW-0903">Direct protein sequencing</keyword>
<keyword id="KW-0456">Lyase</keyword>
<keyword id="KW-0964">Secreted</keyword>
<keyword id="KW-0732">Signal</keyword>
<name>PEL2_BACIU</name>
<gene>
    <name type="primary">pelB</name>
    <name type="synonym">ppr</name>
</gene>
<dbReference type="EC" id="4.2.2.10"/>
<dbReference type="EMBL" id="D83791">
    <property type="protein sequence ID" value="BAA12119.1"/>
    <property type="molecule type" value="Genomic_DNA"/>
</dbReference>
<dbReference type="SMR" id="P94449"/>
<dbReference type="STRING" id="483913.AN935_09735"/>
<dbReference type="CAZy" id="PL1">
    <property type="family name" value="Polysaccharide Lyase Family 1"/>
</dbReference>
<dbReference type="PATRIC" id="fig|1423.172.peg.39"/>
<dbReference type="GO" id="GO:0005576">
    <property type="term" value="C:extracellular region"/>
    <property type="evidence" value="ECO:0007669"/>
    <property type="project" value="UniProtKB-SubCell"/>
</dbReference>
<dbReference type="GO" id="GO:0030570">
    <property type="term" value="F:pectate lyase activity"/>
    <property type="evidence" value="ECO:0007669"/>
    <property type="project" value="InterPro"/>
</dbReference>
<dbReference type="GO" id="GO:0047490">
    <property type="term" value="F:pectin lyase activity"/>
    <property type="evidence" value="ECO:0007669"/>
    <property type="project" value="UniProtKB-EC"/>
</dbReference>
<dbReference type="Gene3D" id="2.160.20.10">
    <property type="entry name" value="Single-stranded right-handed beta-helix, Pectin lyase-like"/>
    <property type="match status" value="1"/>
</dbReference>
<dbReference type="InterPro" id="IPR002022">
    <property type="entry name" value="Pec_lyase"/>
</dbReference>
<dbReference type="InterPro" id="IPR012334">
    <property type="entry name" value="Pectin_lyas_fold"/>
</dbReference>
<dbReference type="InterPro" id="IPR011050">
    <property type="entry name" value="Pectin_lyase_fold/virulence"/>
</dbReference>
<dbReference type="InterPro" id="IPR045032">
    <property type="entry name" value="PEL"/>
</dbReference>
<dbReference type="PANTHER" id="PTHR31683">
    <property type="entry name" value="PECTATE LYASE 18-RELATED"/>
    <property type="match status" value="1"/>
</dbReference>
<dbReference type="PANTHER" id="PTHR31683:SF18">
    <property type="entry name" value="PECTATE LYASE 21-RELATED"/>
    <property type="match status" value="1"/>
</dbReference>
<dbReference type="Pfam" id="PF00544">
    <property type="entry name" value="Pectate_lyase_4"/>
    <property type="match status" value="1"/>
</dbReference>
<dbReference type="SMART" id="SM00656">
    <property type="entry name" value="Amb_all"/>
    <property type="match status" value="1"/>
</dbReference>
<dbReference type="SUPFAM" id="SSF51126">
    <property type="entry name" value="Pectin lyase-like"/>
    <property type="match status" value="1"/>
</dbReference>
<reference key="1">
    <citation type="journal article" date="1996" name="FEBS Lett.">
        <title>Molecular cloning and nucleotide sequence of the gene encoding phosphate-inducible pectin lyase of Bacillus subtilis.</title>
        <authorList>
            <person name="Sakamoto T."/>
            <person name="Kawasaki H."/>
            <person name="Sakai T."/>
        </authorList>
    </citation>
    <scope>NUCLEOTIDE SEQUENCE [GENOMIC DNA]</scope>
    <scope>CATALYTIC ACTIVITY</scope>
    <scope>INDUCTION</scope>
    <source>
        <strain>ATCC 6633 / DSM 347 / IFO 3134 / PCI 219 / NRS 231</strain>
    </source>
</reference>
<reference key="2">
    <citation type="journal article" date="1994" name="Biosci. Biotechnol. Biochem.">
        <title>Purification, characterization, and production of two pectic transeliminases with protopectinase activity from Bacillus subtilis.</title>
        <authorList>
            <person name="Sakamoto T."/>
            <person name="Hours R.A."/>
            <person name="Sakai T."/>
        </authorList>
    </citation>
    <scope>PROTEIN SEQUENCE OF 25-49</scope>
    <scope>FUNCTION</scope>
    <scope>CATALYTIC ACTIVITY</scope>
    <scope>SUBSTRATE SPECIFICITY</scope>
    <scope>ACTIVITY REGULATION</scope>
    <scope>INDUCTION</scope>
    <scope>SUBCELLULAR LOCATION</scope>
    <source>
        <strain>ATCC 6633 / DSM 347 / IFO 3134 / PCI 219 / NRS 231</strain>
    </source>
</reference>
<organism>
    <name type="scientific">Bacillus subtilis</name>
    <dbReference type="NCBI Taxonomy" id="1423"/>
    <lineage>
        <taxon>Bacteria</taxon>
        <taxon>Bacillati</taxon>
        <taxon>Bacillota</taxon>
        <taxon>Bacilli</taxon>
        <taxon>Bacillales</taxon>
        <taxon>Bacillaceae</taxon>
        <taxon>Bacillus</taxon>
    </lineage>
</organism>
<protein>
    <recommendedName>
        <fullName>Pectin lyase</fullName>
        <shortName>PNL</shortName>
        <ecNumber>4.2.2.10</ecNumber>
    </recommendedName>
    <alternativeName>
        <fullName>Endo-pectin transeliminase</fullName>
    </alternativeName>
    <alternativeName>
        <fullName>Protopectinase-R</fullName>
        <shortName>PPase-R</shortName>
    </alternativeName>
</protein>
<accession>P94449</accession>
<feature type="signal peptide" evidence="2">
    <location>
        <begin position="1"/>
        <end position="24"/>
    </location>
</feature>
<feature type="chain" id="PRO_0000367324" description="Pectin lyase">
    <location>
        <begin position="25"/>
        <end position="345"/>
    </location>
</feature>
<feature type="active site" evidence="1">
    <location>
        <position position="234"/>
    </location>
</feature>
<comment type="function">
    <text evidence="2">Catalyzes the depolymerization of pectins of methyl esterification degree from 13 to 75%, with an endo mode of action. Cannot degrade polygalacturonate. Also displays protopectinase activity, i.e. releases pectin from protopectin.</text>
</comment>
<comment type="catalytic activity">
    <reaction evidence="2 3">
        <text>Eliminative cleavage of (1-&gt;4)-alpha-D-galacturonan methyl ester to give oligosaccharides with 4-deoxy-6-O-methyl-alpha-D-galact-4-enuronosyl groups at their non-reducing ends.</text>
        <dbReference type="EC" id="4.2.2.10"/>
    </reaction>
</comment>
<comment type="activity regulation">
    <text evidence="2">Inhibited by Hg(2+) and Mn(2+). Not affected by EDTA in vitro.</text>
</comment>
<comment type="biophysicochemical properties">
    <phDependence>
        <text>Optimum pH is 8.0. Retains 70% of activity after 16 hours incubation in the pH range 4-11, at 37 degrees Celsius.</text>
    </phDependence>
    <temperatureDependence>
        <text>Optimum temperature is 60 degrees Celsius. Retains more than 90% and 70% of activity after 30 minutes incubation at pH 6 at 50 and 60 degrees Celsius, respectively.</text>
    </temperatureDependence>
</comment>
<comment type="subcellular location">
    <subcellularLocation>
        <location evidence="2">Secreted</location>
    </subcellularLocation>
</comment>
<comment type="induction">
    <text evidence="2 3">Up-regulated under high-phosphate conditions.</text>
</comment>
<comment type="miscellaneous">
    <text>Does not require calcium for activity.</text>
</comment>
<comment type="similarity">
    <text evidence="4">Belongs to the polysaccharide lyase 1 family.</text>
</comment>
<evidence type="ECO:0000255" key="1"/>
<evidence type="ECO:0000269" key="2">
    <source>
    </source>
</evidence>
<evidence type="ECO:0000269" key="3">
    <source>
    </source>
</evidence>
<evidence type="ECO:0000305" key="4"/>
<sequence length="345" mass="37996">MKRFCLWFAVFSLLLVLLPGKAFGAVDFPNTSTNGLLGFAGNAKNEKGISKASTTGGKNGQIVYIQSVNDLKTHLGGSTPKILVLQNDISASSKTTVTIGSNKTLVGSYAKKTLKNIYLTTSSASGNVIFQNLTFEHSPQINGNNDIQLYLDSGINYWIDHVTFSGHSYSASGSDLDKLLYVGKSADYITISNSKFANHKYGLILGYPDDSQHQYDGYPHMTIANNYFENLYVRGPGLMRYGYFHVKNNYSNNFNQAITIATKAKIYSEYNYFGKGSEKGGILDDKGTGYFKDTGSYPSLNKQTSPLTSWNPGSNYSYRVQTPQYTKDFVTKYAGSQSTTLVFGY</sequence>